<protein>
    <recommendedName>
        <fullName evidence="2">GTP cyclohydrolase 1</fullName>
        <ecNumber evidence="2">3.5.4.16</ecNumber>
    </recommendedName>
    <alternativeName>
        <fullName evidence="2">GTP cyclohydrolase I</fullName>
        <shortName evidence="2">GTP-CH-I</shortName>
    </alternativeName>
</protein>
<reference key="1">
    <citation type="submission" date="2006-08" db="EMBL/GenBank/DDBJ databases">
        <title>Complete sequence of Maricaulis maris MCS10.</title>
        <authorList>
            <consortium name="US DOE Joint Genome Institute"/>
            <person name="Copeland A."/>
            <person name="Lucas S."/>
            <person name="Lapidus A."/>
            <person name="Barry K."/>
            <person name="Detter J.C."/>
            <person name="Glavina del Rio T."/>
            <person name="Hammon N."/>
            <person name="Israni S."/>
            <person name="Dalin E."/>
            <person name="Tice H."/>
            <person name="Pitluck S."/>
            <person name="Saunders E."/>
            <person name="Brettin T."/>
            <person name="Bruce D."/>
            <person name="Han C."/>
            <person name="Tapia R."/>
            <person name="Gilna P."/>
            <person name="Schmutz J."/>
            <person name="Larimer F."/>
            <person name="Land M."/>
            <person name="Hauser L."/>
            <person name="Kyrpides N."/>
            <person name="Mikhailova N."/>
            <person name="Viollier P."/>
            <person name="Stephens C."/>
            <person name="Richardson P."/>
        </authorList>
    </citation>
    <scope>NUCLEOTIDE SEQUENCE [LARGE SCALE GENOMIC DNA]</scope>
    <source>
        <strain>MCS10</strain>
    </source>
</reference>
<proteinExistence type="inferred from homology"/>
<keyword id="KW-0342">GTP-binding</keyword>
<keyword id="KW-0378">Hydrolase</keyword>
<keyword id="KW-0479">Metal-binding</keyword>
<keyword id="KW-0547">Nucleotide-binding</keyword>
<keyword id="KW-0554">One-carbon metabolism</keyword>
<keyword id="KW-1185">Reference proteome</keyword>
<keyword id="KW-0862">Zinc</keyword>
<gene>
    <name evidence="2" type="primary">folE</name>
    <name type="ordered locus">Mmar10_2399</name>
</gene>
<sequence length="205" mass="22742">MDAVTPDAARIAAAINTKPSREEAEAAVRTLISWAGDDPTREGLLDTPKRVVKAYEEWFSGYDADPLKALGKTFEDVQGYDDMVMLTNIDVESHCEHHLAPIMGVAHVAYLPSKAVVGISKIARVVEIFSKRMQTQETMTAQIADALTEAMEPRGVAVLVDAKHQCMTTRGVHHPNVSTITTTFTGEFRNDRDLKDRFMRLLERA</sequence>
<feature type="chain" id="PRO_1000043707" description="GTP cyclohydrolase 1">
    <location>
        <begin position="1"/>
        <end position="205"/>
    </location>
</feature>
<feature type="binding site" evidence="2">
    <location>
        <position position="95"/>
    </location>
    <ligand>
        <name>Zn(2+)</name>
        <dbReference type="ChEBI" id="CHEBI:29105"/>
    </ligand>
</feature>
<feature type="binding site" evidence="2">
    <location>
        <position position="98"/>
    </location>
    <ligand>
        <name>Zn(2+)</name>
        <dbReference type="ChEBI" id="CHEBI:29105"/>
    </ligand>
</feature>
<feature type="binding site" evidence="2">
    <location>
        <position position="166"/>
    </location>
    <ligand>
        <name>Zn(2+)</name>
        <dbReference type="ChEBI" id="CHEBI:29105"/>
    </ligand>
</feature>
<organism>
    <name type="scientific">Maricaulis maris (strain MCS10)</name>
    <name type="common">Caulobacter maris</name>
    <dbReference type="NCBI Taxonomy" id="394221"/>
    <lineage>
        <taxon>Bacteria</taxon>
        <taxon>Pseudomonadati</taxon>
        <taxon>Pseudomonadota</taxon>
        <taxon>Alphaproteobacteria</taxon>
        <taxon>Maricaulales</taxon>
        <taxon>Maricaulaceae</taxon>
        <taxon>Maricaulis</taxon>
    </lineage>
</organism>
<evidence type="ECO:0000250" key="1"/>
<evidence type="ECO:0000255" key="2">
    <source>
        <dbReference type="HAMAP-Rule" id="MF_00223"/>
    </source>
</evidence>
<comment type="catalytic activity">
    <reaction evidence="2">
        <text>GTP + H2O = 7,8-dihydroneopterin 3'-triphosphate + formate + H(+)</text>
        <dbReference type="Rhea" id="RHEA:17473"/>
        <dbReference type="ChEBI" id="CHEBI:15377"/>
        <dbReference type="ChEBI" id="CHEBI:15378"/>
        <dbReference type="ChEBI" id="CHEBI:15740"/>
        <dbReference type="ChEBI" id="CHEBI:37565"/>
        <dbReference type="ChEBI" id="CHEBI:58462"/>
        <dbReference type="EC" id="3.5.4.16"/>
    </reaction>
</comment>
<comment type="pathway">
    <text evidence="2">Cofactor biosynthesis; 7,8-dihydroneopterin triphosphate biosynthesis; 7,8-dihydroneopterin triphosphate from GTP: step 1/1.</text>
</comment>
<comment type="subunit">
    <text evidence="1">Toroid-shaped homodecamer, composed of two pentamers of five dimers.</text>
</comment>
<comment type="similarity">
    <text evidence="2">Belongs to the GTP cyclohydrolase I family.</text>
</comment>
<accession>Q0AM02</accession>
<dbReference type="EC" id="3.5.4.16" evidence="2"/>
<dbReference type="EMBL" id="CP000449">
    <property type="protein sequence ID" value="ABI66691.1"/>
    <property type="molecule type" value="Genomic_DNA"/>
</dbReference>
<dbReference type="RefSeq" id="WP_011644336.1">
    <property type="nucleotide sequence ID" value="NC_008347.1"/>
</dbReference>
<dbReference type="SMR" id="Q0AM02"/>
<dbReference type="STRING" id="394221.Mmar10_2399"/>
<dbReference type="KEGG" id="mmr:Mmar10_2399"/>
<dbReference type="eggNOG" id="COG0302">
    <property type="taxonomic scope" value="Bacteria"/>
</dbReference>
<dbReference type="HOGENOM" id="CLU_049768_3_1_5"/>
<dbReference type="OrthoDB" id="9801207at2"/>
<dbReference type="UniPathway" id="UPA00848">
    <property type="reaction ID" value="UER00151"/>
</dbReference>
<dbReference type="Proteomes" id="UP000001964">
    <property type="component" value="Chromosome"/>
</dbReference>
<dbReference type="GO" id="GO:0005737">
    <property type="term" value="C:cytoplasm"/>
    <property type="evidence" value="ECO:0007669"/>
    <property type="project" value="TreeGrafter"/>
</dbReference>
<dbReference type="GO" id="GO:0005525">
    <property type="term" value="F:GTP binding"/>
    <property type="evidence" value="ECO:0007669"/>
    <property type="project" value="UniProtKB-KW"/>
</dbReference>
<dbReference type="GO" id="GO:0003934">
    <property type="term" value="F:GTP cyclohydrolase I activity"/>
    <property type="evidence" value="ECO:0007669"/>
    <property type="project" value="UniProtKB-UniRule"/>
</dbReference>
<dbReference type="GO" id="GO:0008270">
    <property type="term" value="F:zinc ion binding"/>
    <property type="evidence" value="ECO:0007669"/>
    <property type="project" value="UniProtKB-UniRule"/>
</dbReference>
<dbReference type="GO" id="GO:0006730">
    <property type="term" value="P:one-carbon metabolic process"/>
    <property type="evidence" value="ECO:0007669"/>
    <property type="project" value="UniProtKB-UniRule"/>
</dbReference>
<dbReference type="GO" id="GO:0006729">
    <property type="term" value="P:tetrahydrobiopterin biosynthetic process"/>
    <property type="evidence" value="ECO:0007669"/>
    <property type="project" value="TreeGrafter"/>
</dbReference>
<dbReference type="GO" id="GO:0046654">
    <property type="term" value="P:tetrahydrofolate biosynthetic process"/>
    <property type="evidence" value="ECO:0007669"/>
    <property type="project" value="UniProtKB-UniRule"/>
</dbReference>
<dbReference type="FunFam" id="1.10.286.10:FF:000001">
    <property type="entry name" value="GTP cyclohydrolase 1"/>
    <property type="match status" value="1"/>
</dbReference>
<dbReference type="FunFam" id="3.30.1130.10:FF:000001">
    <property type="entry name" value="GTP cyclohydrolase 1"/>
    <property type="match status" value="1"/>
</dbReference>
<dbReference type="Gene3D" id="1.10.286.10">
    <property type="match status" value="1"/>
</dbReference>
<dbReference type="Gene3D" id="3.30.1130.10">
    <property type="match status" value="1"/>
</dbReference>
<dbReference type="HAMAP" id="MF_00223">
    <property type="entry name" value="FolE"/>
    <property type="match status" value="1"/>
</dbReference>
<dbReference type="InterPro" id="IPR043133">
    <property type="entry name" value="GTP-CH-I_C/QueF"/>
</dbReference>
<dbReference type="InterPro" id="IPR043134">
    <property type="entry name" value="GTP-CH-I_N"/>
</dbReference>
<dbReference type="InterPro" id="IPR001474">
    <property type="entry name" value="GTP_CycHdrlase_I"/>
</dbReference>
<dbReference type="InterPro" id="IPR020602">
    <property type="entry name" value="GTP_CycHdrlase_I_dom"/>
</dbReference>
<dbReference type="NCBIfam" id="TIGR00063">
    <property type="entry name" value="folE"/>
    <property type="match status" value="1"/>
</dbReference>
<dbReference type="NCBIfam" id="NF006825">
    <property type="entry name" value="PRK09347.1-2"/>
    <property type="match status" value="1"/>
</dbReference>
<dbReference type="NCBIfam" id="NF006826">
    <property type="entry name" value="PRK09347.1-3"/>
    <property type="match status" value="1"/>
</dbReference>
<dbReference type="PANTHER" id="PTHR11109:SF7">
    <property type="entry name" value="GTP CYCLOHYDROLASE 1"/>
    <property type="match status" value="1"/>
</dbReference>
<dbReference type="PANTHER" id="PTHR11109">
    <property type="entry name" value="GTP CYCLOHYDROLASE I"/>
    <property type="match status" value="1"/>
</dbReference>
<dbReference type="Pfam" id="PF01227">
    <property type="entry name" value="GTP_cyclohydroI"/>
    <property type="match status" value="1"/>
</dbReference>
<dbReference type="SUPFAM" id="SSF55620">
    <property type="entry name" value="Tetrahydrobiopterin biosynthesis enzymes-like"/>
    <property type="match status" value="1"/>
</dbReference>
<name>GCH1_MARMM</name>